<gene>
    <name evidence="1" type="primary">astE</name>
    <name type="ordered locus">SEN1736</name>
</gene>
<sequence>MDNFLALTLSGTTPRVRQGKGAGFRWRWLSHGLLELTPDAPVDRALILSAGIHGNETAPVEMLDKLLSALYSGSLTLTWRVLVVLGNPQALAAGIRYCHSDMNRMFGGRWQSFAESDETRRARELELSLDTFFSSGQARVRWHLDLHTAIRGSHHLRFGVLPQRDRPWETDFLAWLGAAGLEALVFHQAPGGTFTHFSSEHFGALSCTLELGKALPFRQNDLTQFNVTSQALSALLSGVETSTSFSPPLRYRVVSQITRHSDKFALYMDAQTLNFTAFAKGTLLAEEGDKRVTVTHDVEYVLFPNPSVACGLRAGLMLERLP</sequence>
<accession>B5QWI6</accession>
<keyword id="KW-0056">Arginine metabolism</keyword>
<keyword id="KW-0378">Hydrolase</keyword>
<keyword id="KW-0479">Metal-binding</keyword>
<keyword id="KW-0862">Zinc</keyword>
<dbReference type="EC" id="3.5.1.96" evidence="1"/>
<dbReference type="EMBL" id="AM933172">
    <property type="protein sequence ID" value="CAR33317.1"/>
    <property type="molecule type" value="Genomic_DNA"/>
</dbReference>
<dbReference type="RefSeq" id="WP_000368441.1">
    <property type="nucleotide sequence ID" value="NC_011294.1"/>
</dbReference>
<dbReference type="SMR" id="B5QWI6"/>
<dbReference type="KEGG" id="set:SEN1736"/>
<dbReference type="HOGENOM" id="CLU_071608_0_0_6"/>
<dbReference type="UniPathway" id="UPA00185">
    <property type="reaction ID" value="UER00283"/>
</dbReference>
<dbReference type="Proteomes" id="UP000000613">
    <property type="component" value="Chromosome"/>
</dbReference>
<dbReference type="GO" id="GO:0016788">
    <property type="term" value="F:hydrolase activity, acting on ester bonds"/>
    <property type="evidence" value="ECO:0007669"/>
    <property type="project" value="UniProtKB-UniRule"/>
</dbReference>
<dbReference type="GO" id="GO:0009017">
    <property type="term" value="F:succinylglutamate desuccinylase activity"/>
    <property type="evidence" value="ECO:0007669"/>
    <property type="project" value="UniProtKB-EC"/>
</dbReference>
<dbReference type="GO" id="GO:0008270">
    <property type="term" value="F:zinc ion binding"/>
    <property type="evidence" value="ECO:0007669"/>
    <property type="project" value="UniProtKB-UniRule"/>
</dbReference>
<dbReference type="GO" id="GO:0019544">
    <property type="term" value="P:arginine catabolic process to glutamate"/>
    <property type="evidence" value="ECO:0007669"/>
    <property type="project" value="UniProtKB-UniRule"/>
</dbReference>
<dbReference type="GO" id="GO:0019545">
    <property type="term" value="P:arginine catabolic process to succinate"/>
    <property type="evidence" value="ECO:0007669"/>
    <property type="project" value="UniProtKB-UniRule"/>
</dbReference>
<dbReference type="CDD" id="cd03855">
    <property type="entry name" value="M14_ASTE"/>
    <property type="match status" value="1"/>
</dbReference>
<dbReference type="FunFam" id="3.40.630.10:FF:000017">
    <property type="entry name" value="Succinylglutamate desuccinylase"/>
    <property type="match status" value="1"/>
</dbReference>
<dbReference type="Gene3D" id="3.40.630.10">
    <property type="entry name" value="Zn peptidases"/>
    <property type="match status" value="1"/>
</dbReference>
<dbReference type="HAMAP" id="MF_00767">
    <property type="entry name" value="Arg_catab_AstE"/>
    <property type="match status" value="1"/>
</dbReference>
<dbReference type="InterPro" id="IPR050178">
    <property type="entry name" value="AspA/AstE_fam"/>
</dbReference>
<dbReference type="InterPro" id="IPR055438">
    <property type="entry name" value="AstE_AspA_cat"/>
</dbReference>
<dbReference type="InterPro" id="IPR007036">
    <property type="entry name" value="Aste_AspA_hybrid_dom"/>
</dbReference>
<dbReference type="InterPro" id="IPR016681">
    <property type="entry name" value="SuccinylGlu_desuccinylase"/>
</dbReference>
<dbReference type="NCBIfam" id="TIGR03242">
    <property type="entry name" value="arg_catab_astE"/>
    <property type="match status" value="1"/>
</dbReference>
<dbReference type="NCBIfam" id="NF003706">
    <property type="entry name" value="PRK05324.1"/>
    <property type="match status" value="1"/>
</dbReference>
<dbReference type="PANTHER" id="PTHR15162">
    <property type="entry name" value="ASPARTOACYLASE"/>
    <property type="match status" value="1"/>
</dbReference>
<dbReference type="PANTHER" id="PTHR15162:SF7">
    <property type="entry name" value="SUCCINYLGLUTAMATE DESUCCINYLASE"/>
    <property type="match status" value="1"/>
</dbReference>
<dbReference type="Pfam" id="PF24827">
    <property type="entry name" value="AstE_AspA_cat"/>
    <property type="match status" value="1"/>
</dbReference>
<dbReference type="Pfam" id="PF04952">
    <property type="entry name" value="AstE_AspA_hybrid"/>
    <property type="match status" value="1"/>
</dbReference>
<dbReference type="PIRSF" id="PIRSF017020">
    <property type="entry name" value="AstE"/>
    <property type="match status" value="1"/>
</dbReference>
<dbReference type="SUPFAM" id="SSF53187">
    <property type="entry name" value="Zn-dependent exopeptidases"/>
    <property type="match status" value="1"/>
</dbReference>
<name>ASTE_SALEP</name>
<protein>
    <recommendedName>
        <fullName evidence="1">Succinylglutamate desuccinylase</fullName>
        <ecNumber evidence="1">3.5.1.96</ecNumber>
    </recommendedName>
</protein>
<reference key="1">
    <citation type="journal article" date="2008" name="Genome Res.">
        <title>Comparative genome analysis of Salmonella enteritidis PT4 and Salmonella gallinarum 287/91 provides insights into evolutionary and host adaptation pathways.</title>
        <authorList>
            <person name="Thomson N.R."/>
            <person name="Clayton D.J."/>
            <person name="Windhorst D."/>
            <person name="Vernikos G."/>
            <person name="Davidson S."/>
            <person name="Churcher C."/>
            <person name="Quail M.A."/>
            <person name="Stevens M."/>
            <person name="Jones M.A."/>
            <person name="Watson M."/>
            <person name="Barron A."/>
            <person name="Layton A."/>
            <person name="Pickard D."/>
            <person name="Kingsley R.A."/>
            <person name="Bignell A."/>
            <person name="Clark L."/>
            <person name="Harris B."/>
            <person name="Ormond D."/>
            <person name="Abdellah Z."/>
            <person name="Brooks K."/>
            <person name="Cherevach I."/>
            <person name="Chillingworth T."/>
            <person name="Woodward J."/>
            <person name="Norberczak H."/>
            <person name="Lord A."/>
            <person name="Arrowsmith C."/>
            <person name="Jagels K."/>
            <person name="Moule S."/>
            <person name="Mungall K."/>
            <person name="Saunders M."/>
            <person name="Whitehead S."/>
            <person name="Chabalgoity J.A."/>
            <person name="Maskell D."/>
            <person name="Humphreys T."/>
            <person name="Roberts M."/>
            <person name="Barrow P.A."/>
            <person name="Dougan G."/>
            <person name="Parkhill J."/>
        </authorList>
    </citation>
    <scope>NUCLEOTIDE SEQUENCE [LARGE SCALE GENOMIC DNA]</scope>
    <source>
        <strain>P125109</strain>
    </source>
</reference>
<comment type="function">
    <text evidence="1">Transforms N(2)-succinylglutamate into succinate and glutamate.</text>
</comment>
<comment type="catalytic activity">
    <reaction evidence="1">
        <text>N-succinyl-L-glutamate + H2O = L-glutamate + succinate</text>
        <dbReference type="Rhea" id="RHEA:15169"/>
        <dbReference type="ChEBI" id="CHEBI:15377"/>
        <dbReference type="ChEBI" id="CHEBI:29985"/>
        <dbReference type="ChEBI" id="CHEBI:30031"/>
        <dbReference type="ChEBI" id="CHEBI:58763"/>
        <dbReference type="EC" id="3.5.1.96"/>
    </reaction>
</comment>
<comment type="cofactor">
    <cofactor evidence="1">
        <name>Zn(2+)</name>
        <dbReference type="ChEBI" id="CHEBI:29105"/>
    </cofactor>
    <text evidence="1">Binds 1 zinc ion per subunit.</text>
</comment>
<comment type="pathway">
    <text evidence="1">Amino-acid degradation; L-arginine degradation via AST pathway; L-glutamate and succinate from L-arginine: step 5/5.</text>
</comment>
<comment type="similarity">
    <text evidence="1">Belongs to the AspA/AstE family. Succinylglutamate desuccinylase subfamily.</text>
</comment>
<organism>
    <name type="scientific">Salmonella enteritidis PT4 (strain P125109)</name>
    <dbReference type="NCBI Taxonomy" id="550537"/>
    <lineage>
        <taxon>Bacteria</taxon>
        <taxon>Pseudomonadati</taxon>
        <taxon>Pseudomonadota</taxon>
        <taxon>Gammaproteobacteria</taxon>
        <taxon>Enterobacterales</taxon>
        <taxon>Enterobacteriaceae</taxon>
        <taxon>Salmonella</taxon>
    </lineage>
</organism>
<evidence type="ECO:0000255" key="1">
    <source>
        <dbReference type="HAMAP-Rule" id="MF_00767"/>
    </source>
</evidence>
<feature type="chain" id="PRO_1000133640" description="Succinylglutamate desuccinylase">
    <location>
        <begin position="1"/>
        <end position="322"/>
    </location>
</feature>
<feature type="active site" evidence="1">
    <location>
        <position position="210"/>
    </location>
</feature>
<feature type="binding site" evidence="1">
    <location>
        <position position="53"/>
    </location>
    <ligand>
        <name>Zn(2+)</name>
        <dbReference type="ChEBI" id="CHEBI:29105"/>
    </ligand>
</feature>
<feature type="binding site" evidence="1">
    <location>
        <position position="56"/>
    </location>
    <ligand>
        <name>Zn(2+)</name>
        <dbReference type="ChEBI" id="CHEBI:29105"/>
    </ligand>
</feature>
<feature type="binding site" evidence="1">
    <location>
        <position position="147"/>
    </location>
    <ligand>
        <name>Zn(2+)</name>
        <dbReference type="ChEBI" id="CHEBI:29105"/>
    </ligand>
</feature>
<proteinExistence type="inferred from homology"/>